<feature type="chain" id="PRO_0000150043" description="S-adenosylmethionine synthase">
    <location>
        <begin position="1"/>
        <end position="400"/>
    </location>
</feature>
<feature type="binding site" evidence="2">
    <location>
        <begin position="136"/>
        <end position="141"/>
    </location>
    <ligand>
        <name>ATP</name>
        <dbReference type="ChEBI" id="CHEBI:30616"/>
    </ligand>
</feature>
<reference key="1">
    <citation type="journal article" date="2000" name="Nature">
        <title>The genome sequence of the thermoacidophilic scavenger Thermoplasma acidophilum.</title>
        <authorList>
            <person name="Ruepp A."/>
            <person name="Graml W."/>
            <person name="Santos-Martinez M.-L."/>
            <person name="Koretke K.K."/>
            <person name="Volker C."/>
            <person name="Mewes H.-W."/>
            <person name="Frishman D."/>
            <person name="Stocker S."/>
            <person name="Lupas A.N."/>
            <person name="Baumeister W."/>
        </authorList>
    </citation>
    <scope>NUCLEOTIDE SEQUENCE [LARGE SCALE GENOMIC DNA]</scope>
    <source>
        <strain>ATCC 25905 / DSM 1728 / JCM 9062 / NBRC 15155 / AMRC-C165</strain>
    </source>
</reference>
<name>METK_THEAC</name>
<organism>
    <name type="scientific">Thermoplasma acidophilum (strain ATCC 25905 / DSM 1728 / JCM 9062 / NBRC 15155 / AMRC-C165)</name>
    <dbReference type="NCBI Taxonomy" id="273075"/>
    <lineage>
        <taxon>Archaea</taxon>
        <taxon>Methanobacteriati</taxon>
        <taxon>Thermoplasmatota</taxon>
        <taxon>Thermoplasmata</taxon>
        <taxon>Thermoplasmatales</taxon>
        <taxon>Thermoplasmataceae</taxon>
        <taxon>Thermoplasma</taxon>
    </lineage>
</organism>
<comment type="function">
    <text evidence="1">Catalyzes the formation of S-adenosylmethionine from methionine and ATP.</text>
</comment>
<comment type="catalytic activity">
    <reaction>
        <text>L-methionine + ATP + H2O = S-adenosyl-L-methionine + phosphate + diphosphate</text>
        <dbReference type="Rhea" id="RHEA:21080"/>
        <dbReference type="ChEBI" id="CHEBI:15377"/>
        <dbReference type="ChEBI" id="CHEBI:30616"/>
        <dbReference type="ChEBI" id="CHEBI:33019"/>
        <dbReference type="ChEBI" id="CHEBI:43474"/>
        <dbReference type="ChEBI" id="CHEBI:57844"/>
        <dbReference type="ChEBI" id="CHEBI:59789"/>
        <dbReference type="EC" id="2.5.1.6"/>
    </reaction>
</comment>
<comment type="cofactor">
    <cofactor evidence="1">
        <name>Mg(2+)</name>
        <dbReference type="ChEBI" id="CHEBI:18420"/>
    </cofactor>
</comment>
<comment type="pathway">
    <text>Amino-acid biosynthesis; S-adenosyl-L-methionine biosynthesis; S-adenosyl-L-methionine from L-methionine: step 1/1.</text>
</comment>
<comment type="similarity">
    <text evidence="3">Belongs to the AdoMet synthase 2 family.</text>
</comment>
<keyword id="KW-0067">ATP-binding</keyword>
<keyword id="KW-0460">Magnesium</keyword>
<keyword id="KW-0547">Nucleotide-binding</keyword>
<keyword id="KW-0554">One-carbon metabolism</keyword>
<keyword id="KW-1185">Reference proteome</keyword>
<keyword id="KW-0808">Transferase</keyword>
<gene>
    <name type="primary">mat</name>
    <name type="ordered locus">Ta0059</name>
</gene>
<protein>
    <recommendedName>
        <fullName>S-adenosylmethionine synthase</fullName>
        <shortName>AdoMet synthase</shortName>
        <ecNumber>2.5.1.6</ecNumber>
    </recommendedName>
    <alternativeName>
        <fullName>Methionine adenosyltransferase</fullName>
    </alternativeName>
</protein>
<proteinExistence type="inferred from homology"/>
<evidence type="ECO:0000250" key="1"/>
<evidence type="ECO:0000255" key="2"/>
<evidence type="ECO:0000305" key="3"/>
<accession>Q9HM12</accession>
<sequence length="400" mass="44402">MERNISVEELHQIPTPKKEVEIVERKGIGHPDSVADGIAEAVSRSLSKYYIEHYGRILHHNTDQVEVVGGQSAPKYGGGLVLEPTYILLSGRATTKVGNDRVPFKSITIKAARDYLREHFRHLDVDADVMIDSRIGQGSVDLVEVYDTKKLEANDTSFGVGFAPLSETETMVLNTEKYLNGELKKKMPMVGYDIKVMGFRQKDTINLTVAAAMVDKYIHDADEYFNIKDELKQLVLDNAVEYTDKEVKVYINTADIKEDGKAVGYLTVTGMSMENGDDGSVGRGNRVNGLITPYRAMSMEAAAGKNPVTHVGKLYNVLSNKIANDIVKEEGNDIAEVLVRIVSQIGRPIDDPHVASVQVIYEGNVDHSKHKNNIRNLVDDRLAHISDLTMEFVEGKIPVF</sequence>
<dbReference type="EC" id="2.5.1.6"/>
<dbReference type="EMBL" id="AL445063">
    <property type="protein sequence ID" value="CAC11207.1"/>
    <property type="molecule type" value="Genomic_DNA"/>
</dbReference>
<dbReference type="RefSeq" id="WP_010900487.1">
    <property type="nucleotide sequence ID" value="NC_002578.1"/>
</dbReference>
<dbReference type="SMR" id="Q9HM12"/>
<dbReference type="FunCoup" id="Q9HM12">
    <property type="interactions" value="113"/>
</dbReference>
<dbReference type="STRING" id="273075.gene:9571274"/>
<dbReference type="PaxDb" id="273075-Ta0059"/>
<dbReference type="EnsemblBacteria" id="CAC11207">
    <property type="protein sequence ID" value="CAC11207"/>
    <property type="gene ID" value="CAC11207"/>
</dbReference>
<dbReference type="KEGG" id="tac:Ta0059"/>
<dbReference type="eggNOG" id="arCOG01678">
    <property type="taxonomic scope" value="Archaea"/>
</dbReference>
<dbReference type="HOGENOM" id="CLU_057642_0_0_2"/>
<dbReference type="InParanoid" id="Q9HM12"/>
<dbReference type="OrthoDB" id="204488at2157"/>
<dbReference type="UniPathway" id="UPA00315">
    <property type="reaction ID" value="UER00080"/>
</dbReference>
<dbReference type="Proteomes" id="UP000001024">
    <property type="component" value="Chromosome"/>
</dbReference>
<dbReference type="GO" id="GO:0005524">
    <property type="term" value="F:ATP binding"/>
    <property type="evidence" value="ECO:0007669"/>
    <property type="project" value="UniProtKB-UniRule"/>
</dbReference>
<dbReference type="GO" id="GO:0000287">
    <property type="term" value="F:magnesium ion binding"/>
    <property type="evidence" value="ECO:0007669"/>
    <property type="project" value="UniProtKB-UniRule"/>
</dbReference>
<dbReference type="GO" id="GO:0004478">
    <property type="term" value="F:methionine adenosyltransferase activity"/>
    <property type="evidence" value="ECO:0007669"/>
    <property type="project" value="UniProtKB-UniRule"/>
</dbReference>
<dbReference type="GO" id="GO:0006730">
    <property type="term" value="P:one-carbon metabolic process"/>
    <property type="evidence" value="ECO:0007669"/>
    <property type="project" value="UniProtKB-KW"/>
</dbReference>
<dbReference type="GO" id="GO:0006556">
    <property type="term" value="P:S-adenosylmethionine biosynthetic process"/>
    <property type="evidence" value="ECO:0007669"/>
    <property type="project" value="UniProtKB-UniRule"/>
</dbReference>
<dbReference type="Gene3D" id="3.30.300.10">
    <property type="match status" value="1"/>
</dbReference>
<dbReference type="Gene3D" id="3.30.300.280">
    <property type="entry name" value="S-adenosylmethionine synthetase, C-terminal domain"/>
    <property type="match status" value="1"/>
</dbReference>
<dbReference type="Gene3D" id="3.30.300.340">
    <property type="entry name" value="S-adenosylmethionine synthetase, N-terminal domain"/>
    <property type="match status" value="1"/>
</dbReference>
<dbReference type="HAMAP" id="MF_00136">
    <property type="entry name" value="S_AdoMet_synth2"/>
    <property type="match status" value="1"/>
</dbReference>
<dbReference type="InterPro" id="IPR042543">
    <property type="entry name" value="AdoMet_synthase_2"/>
</dbReference>
<dbReference type="InterPro" id="IPR027790">
    <property type="entry name" value="AdoMet_synthase_2_family"/>
</dbReference>
<dbReference type="InterPro" id="IPR042544">
    <property type="entry name" value="AdoMet_synthase_3"/>
</dbReference>
<dbReference type="InterPro" id="IPR002795">
    <property type="entry name" value="S-AdoMet_synthetase_arc"/>
</dbReference>
<dbReference type="NCBIfam" id="NF003364">
    <property type="entry name" value="PRK04439.1-3"/>
    <property type="match status" value="1"/>
</dbReference>
<dbReference type="NCBIfam" id="NF003366">
    <property type="entry name" value="PRK04439.1-5"/>
    <property type="match status" value="1"/>
</dbReference>
<dbReference type="PANTHER" id="PTHR36697">
    <property type="entry name" value="S-ADENOSYLMETHIONINE SYNTHASE"/>
    <property type="match status" value="1"/>
</dbReference>
<dbReference type="PANTHER" id="PTHR36697:SF1">
    <property type="entry name" value="S-ADENOSYLMETHIONINE SYNTHASE"/>
    <property type="match status" value="1"/>
</dbReference>
<dbReference type="Pfam" id="PF01941">
    <property type="entry name" value="AdoMet_Synthase"/>
    <property type="match status" value="1"/>
</dbReference>